<reference key="1">
    <citation type="submission" date="2008-10" db="EMBL/GenBank/DDBJ databases">
        <title>Genome sequence of Bacillus cereus G9842.</title>
        <authorList>
            <person name="Dodson R.J."/>
            <person name="Durkin A.S."/>
            <person name="Rosovitz M.J."/>
            <person name="Rasko D.A."/>
            <person name="Hoffmaster A."/>
            <person name="Ravel J."/>
            <person name="Sutton G."/>
        </authorList>
    </citation>
    <scope>NUCLEOTIDE SEQUENCE [LARGE SCALE GENOMIC DNA]</scope>
    <source>
        <strain>G9842</strain>
    </source>
</reference>
<dbReference type="EC" id="1.1.5.4" evidence="1"/>
<dbReference type="EMBL" id="CP001186">
    <property type="protein sequence ID" value="ACK94599.1"/>
    <property type="molecule type" value="Genomic_DNA"/>
</dbReference>
<dbReference type="RefSeq" id="WP_000069147.1">
    <property type="nucleotide sequence ID" value="NC_011772.1"/>
</dbReference>
<dbReference type="SMR" id="B7ILI6"/>
<dbReference type="KEGG" id="bcg:BCG9842_B2267"/>
<dbReference type="HOGENOM" id="CLU_028151_0_0_9"/>
<dbReference type="UniPathway" id="UPA00223">
    <property type="reaction ID" value="UER01008"/>
</dbReference>
<dbReference type="Proteomes" id="UP000006744">
    <property type="component" value="Chromosome"/>
</dbReference>
<dbReference type="GO" id="GO:0047545">
    <property type="term" value="F:2-hydroxyglutarate dehydrogenase activity"/>
    <property type="evidence" value="ECO:0007669"/>
    <property type="project" value="TreeGrafter"/>
</dbReference>
<dbReference type="GO" id="GO:0008924">
    <property type="term" value="F:L-malate dehydrogenase (quinone) activity"/>
    <property type="evidence" value="ECO:0007669"/>
    <property type="project" value="UniProtKB-UniRule"/>
</dbReference>
<dbReference type="GO" id="GO:0006099">
    <property type="term" value="P:tricarboxylic acid cycle"/>
    <property type="evidence" value="ECO:0007669"/>
    <property type="project" value="UniProtKB-UniRule"/>
</dbReference>
<dbReference type="HAMAP" id="MF_00212">
    <property type="entry name" value="MQO"/>
    <property type="match status" value="1"/>
</dbReference>
<dbReference type="InterPro" id="IPR036188">
    <property type="entry name" value="FAD/NAD-bd_sf"/>
</dbReference>
<dbReference type="InterPro" id="IPR006231">
    <property type="entry name" value="MQO"/>
</dbReference>
<dbReference type="NCBIfam" id="TIGR01320">
    <property type="entry name" value="mal_quin_oxido"/>
    <property type="match status" value="1"/>
</dbReference>
<dbReference type="NCBIfam" id="NF003603">
    <property type="entry name" value="PRK05257.1-1"/>
    <property type="match status" value="1"/>
</dbReference>
<dbReference type="NCBIfam" id="NF003604">
    <property type="entry name" value="PRK05257.1-3"/>
    <property type="match status" value="1"/>
</dbReference>
<dbReference type="NCBIfam" id="NF003605">
    <property type="entry name" value="PRK05257.1-4"/>
    <property type="match status" value="1"/>
</dbReference>
<dbReference type="NCBIfam" id="NF003606">
    <property type="entry name" value="PRK05257.2-1"/>
    <property type="match status" value="1"/>
</dbReference>
<dbReference type="NCBIfam" id="NF003608">
    <property type="entry name" value="PRK05257.2-4"/>
    <property type="match status" value="1"/>
</dbReference>
<dbReference type="NCBIfam" id="NF003610">
    <property type="entry name" value="PRK05257.3-1"/>
    <property type="match status" value="1"/>
</dbReference>
<dbReference type="NCBIfam" id="NF003611">
    <property type="entry name" value="PRK05257.3-2"/>
    <property type="match status" value="1"/>
</dbReference>
<dbReference type="NCBIfam" id="NF009875">
    <property type="entry name" value="PRK13339.1"/>
    <property type="match status" value="1"/>
</dbReference>
<dbReference type="PANTHER" id="PTHR43104">
    <property type="entry name" value="L-2-HYDROXYGLUTARATE DEHYDROGENASE, MITOCHONDRIAL"/>
    <property type="match status" value="1"/>
</dbReference>
<dbReference type="PANTHER" id="PTHR43104:SF2">
    <property type="entry name" value="L-2-HYDROXYGLUTARATE DEHYDROGENASE, MITOCHONDRIAL"/>
    <property type="match status" value="1"/>
</dbReference>
<dbReference type="Pfam" id="PF06039">
    <property type="entry name" value="Mqo"/>
    <property type="match status" value="1"/>
</dbReference>
<dbReference type="SUPFAM" id="SSF51905">
    <property type="entry name" value="FAD/NAD(P)-binding domain"/>
    <property type="match status" value="1"/>
</dbReference>
<protein>
    <recommendedName>
        <fullName evidence="1">Probable malate:quinone oxidoreductase</fullName>
        <ecNumber evidence="1">1.1.5.4</ecNumber>
    </recommendedName>
    <alternativeName>
        <fullName evidence="1">MQO</fullName>
    </alternativeName>
    <alternativeName>
        <fullName evidence="1">Malate dehydrogenase [quinone]</fullName>
    </alternativeName>
</protein>
<evidence type="ECO:0000255" key="1">
    <source>
        <dbReference type="HAMAP-Rule" id="MF_00212"/>
    </source>
</evidence>
<sequence>MSNMQQKTDVILIGAGIMSATLGSLLKELAPEWEIKVFEKLASAGEESSNEWNNAGTGHSALCELNYTSEKSDGSIDIGKAVKVNEQFQLSRQFWAYLVKSKLIRNPQDFIMPLPHMSLVQGEKNVEFLKNRFEALSKNPLFQGMEFSDAPETLKKWLPLIMEGRTSNEPMAATKIDSGTDVNFGALTRMLFDYLKTKNVELNYKHSVENIKRTKNGLWEVKVHDMNSGKIEHHTAKFVFIGGGGGSLPLLQKTGIPESKHIGGFPVSGLFMVCKNQKVVEQHHAKVYGKAKVGAPPMSVPHLDTRYIDNKKALLFGPFAGFSPKFLKTGSNLDLIGSVKPNNVLTMLAAGVKEMGLTKYLIQQVMLSHEKRMEELREFIPNAKSEDWDIVVAGQRVQVIKDTDAGGKGTLQFGTEVVSAADGSIAALLGASPGASTAVHVMLEVLEKCFPSRMVEWEEKIKEMIPSYGISLTENPRLFQDLHTSTGRTLGLNEKETVHN</sequence>
<organism>
    <name type="scientific">Bacillus cereus (strain G9842)</name>
    <dbReference type="NCBI Taxonomy" id="405531"/>
    <lineage>
        <taxon>Bacteria</taxon>
        <taxon>Bacillati</taxon>
        <taxon>Bacillota</taxon>
        <taxon>Bacilli</taxon>
        <taxon>Bacillales</taxon>
        <taxon>Bacillaceae</taxon>
        <taxon>Bacillus</taxon>
        <taxon>Bacillus cereus group</taxon>
    </lineage>
</organism>
<gene>
    <name evidence="1" type="primary">mqo</name>
    <name type="ordered locus">BCG9842_B2267</name>
</gene>
<feature type="chain" id="PRO_1000191311" description="Probable malate:quinone oxidoreductase">
    <location>
        <begin position="1"/>
        <end position="500"/>
    </location>
</feature>
<keyword id="KW-0274">FAD</keyword>
<keyword id="KW-0285">Flavoprotein</keyword>
<keyword id="KW-0560">Oxidoreductase</keyword>
<keyword id="KW-0816">Tricarboxylic acid cycle</keyword>
<name>MQO_BACC2</name>
<proteinExistence type="inferred from homology"/>
<comment type="catalytic activity">
    <reaction evidence="1">
        <text>(S)-malate + a quinone = a quinol + oxaloacetate</text>
        <dbReference type="Rhea" id="RHEA:46012"/>
        <dbReference type="ChEBI" id="CHEBI:15589"/>
        <dbReference type="ChEBI" id="CHEBI:16452"/>
        <dbReference type="ChEBI" id="CHEBI:24646"/>
        <dbReference type="ChEBI" id="CHEBI:132124"/>
        <dbReference type="EC" id="1.1.5.4"/>
    </reaction>
</comment>
<comment type="cofactor">
    <cofactor evidence="1">
        <name>FAD</name>
        <dbReference type="ChEBI" id="CHEBI:57692"/>
    </cofactor>
</comment>
<comment type="pathway">
    <text evidence="1">Carbohydrate metabolism; tricarboxylic acid cycle; oxaloacetate from (S)-malate (quinone route): step 1/1.</text>
</comment>
<comment type="similarity">
    <text evidence="1">Belongs to the MQO family.</text>
</comment>
<accession>B7ILI6</accession>